<name>RNPA_XANOM</name>
<dbReference type="EC" id="3.1.26.5" evidence="1"/>
<dbReference type="EMBL" id="AP008229">
    <property type="protein sequence ID" value="BAE71126.1"/>
    <property type="molecule type" value="Genomic_DNA"/>
</dbReference>
<dbReference type="RefSeq" id="WP_011409863.1">
    <property type="nucleotide sequence ID" value="NC_007705.1"/>
</dbReference>
<dbReference type="SMR" id="Q2NX51"/>
<dbReference type="KEGG" id="xom:XOO4371"/>
<dbReference type="HOGENOM" id="CLU_117179_3_0_6"/>
<dbReference type="GO" id="GO:0030677">
    <property type="term" value="C:ribonuclease P complex"/>
    <property type="evidence" value="ECO:0007669"/>
    <property type="project" value="TreeGrafter"/>
</dbReference>
<dbReference type="GO" id="GO:0042781">
    <property type="term" value="F:3'-tRNA processing endoribonuclease activity"/>
    <property type="evidence" value="ECO:0007669"/>
    <property type="project" value="TreeGrafter"/>
</dbReference>
<dbReference type="GO" id="GO:0004526">
    <property type="term" value="F:ribonuclease P activity"/>
    <property type="evidence" value="ECO:0007669"/>
    <property type="project" value="UniProtKB-UniRule"/>
</dbReference>
<dbReference type="GO" id="GO:0000049">
    <property type="term" value="F:tRNA binding"/>
    <property type="evidence" value="ECO:0007669"/>
    <property type="project" value="UniProtKB-UniRule"/>
</dbReference>
<dbReference type="GO" id="GO:0001682">
    <property type="term" value="P:tRNA 5'-leader removal"/>
    <property type="evidence" value="ECO:0007669"/>
    <property type="project" value="UniProtKB-UniRule"/>
</dbReference>
<dbReference type="FunFam" id="3.30.230.10:FF:000082">
    <property type="entry name" value="Ribonuclease P protein component"/>
    <property type="match status" value="1"/>
</dbReference>
<dbReference type="Gene3D" id="3.30.230.10">
    <property type="match status" value="1"/>
</dbReference>
<dbReference type="HAMAP" id="MF_00227">
    <property type="entry name" value="RNase_P"/>
    <property type="match status" value="1"/>
</dbReference>
<dbReference type="InterPro" id="IPR020568">
    <property type="entry name" value="Ribosomal_Su5_D2-typ_SF"/>
</dbReference>
<dbReference type="InterPro" id="IPR014721">
    <property type="entry name" value="Ribsml_uS5_D2-typ_fold_subgr"/>
</dbReference>
<dbReference type="InterPro" id="IPR000100">
    <property type="entry name" value="RNase_P"/>
</dbReference>
<dbReference type="InterPro" id="IPR020539">
    <property type="entry name" value="RNase_P_CS"/>
</dbReference>
<dbReference type="NCBIfam" id="TIGR00188">
    <property type="entry name" value="rnpA"/>
    <property type="match status" value="1"/>
</dbReference>
<dbReference type="PANTHER" id="PTHR33992">
    <property type="entry name" value="RIBONUCLEASE P PROTEIN COMPONENT"/>
    <property type="match status" value="1"/>
</dbReference>
<dbReference type="PANTHER" id="PTHR33992:SF1">
    <property type="entry name" value="RIBONUCLEASE P PROTEIN COMPONENT"/>
    <property type="match status" value="1"/>
</dbReference>
<dbReference type="Pfam" id="PF00825">
    <property type="entry name" value="Ribonuclease_P"/>
    <property type="match status" value="1"/>
</dbReference>
<dbReference type="SUPFAM" id="SSF54211">
    <property type="entry name" value="Ribosomal protein S5 domain 2-like"/>
    <property type="match status" value="1"/>
</dbReference>
<dbReference type="PROSITE" id="PS00648">
    <property type="entry name" value="RIBONUCLEASE_P"/>
    <property type="match status" value="1"/>
</dbReference>
<organism>
    <name type="scientific">Xanthomonas oryzae pv. oryzae (strain MAFF 311018)</name>
    <dbReference type="NCBI Taxonomy" id="342109"/>
    <lineage>
        <taxon>Bacteria</taxon>
        <taxon>Pseudomonadati</taxon>
        <taxon>Pseudomonadota</taxon>
        <taxon>Gammaproteobacteria</taxon>
        <taxon>Lysobacterales</taxon>
        <taxon>Lysobacteraceae</taxon>
        <taxon>Xanthomonas</taxon>
    </lineage>
</organism>
<keyword id="KW-0255">Endonuclease</keyword>
<keyword id="KW-0378">Hydrolase</keyword>
<keyword id="KW-0540">Nuclease</keyword>
<keyword id="KW-0694">RNA-binding</keyword>
<keyword id="KW-0819">tRNA processing</keyword>
<reference key="1">
    <citation type="journal article" date="2005" name="Jpn. Agric. Res. Q.">
        <title>Genome sequence of Xanthomonas oryzae pv. oryzae suggests contribution of large numbers of effector genes and insertion sequences to its race diversity.</title>
        <authorList>
            <person name="Ochiai H."/>
            <person name="Inoue Y."/>
            <person name="Takeya M."/>
            <person name="Sasaki A."/>
            <person name="Kaku H."/>
        </authorList>
    </citation>
    <scope>NUCLEOTIDE SEQUENCE [LARGE SCALE GENOMIC DNA]</scope>
    <source>
        <strain>MAFF 311018</strain>
    </source>
</reference>
<protein>
    <recommendedName>
        <fullName evidence="1">Ribonuclease P protein component</fullName>
        <shortName evidence="1">RNase P protein</shortName>
        <shortName evidence="1">RNaseP protein</shortName>
        <ecNumber evidence="1">3.1.26.5</ecNumber>
    </recommendedName>
    <alternativeName>
        <fullName evidence="1">Protein C5</fullName>
    </alternativeName>
</protein>
<proteinExistence type="inferred from homology"/>
<accession>Q2NX51</accession>
<comment type="function">
    <text evidence="1">RNaseP catalyzes the removal of the 5'-leader sequence from pre-tRNA to produce the mature 5'-terminus. It can also cleave other RNA substrates such as 4.5S RNA. The protein component plays an auxiliary but essential role in vivo by binding to the 5'-leader sequence and broadening the substrate specificity of the ribozyme.</text>
</comment>
<comment type="catalytic activity">
    <reaction evidence="1">
        <text>Endonucleolytic cleavage of RNA, removing 5'-extranucleotides from tRNA precursor.</text>
        <dbReference type="EC" id="3.1.26.5"/>
    </reaction>
</comment>
<comment type="subunit">
    <text evidence="1">Consists of a catalytic RNA component (M1 or rnpB) and a protein subunit.</text>
</comment>
<comment type="similarity">
    <text evidence="1">Belongs to the RnpA family.</text>
</comment>
<feature type="chain" id="PRO_1000021492" description="Ribonuclease P protein component">
    <location>
        <begin position="1"/>
        <end position="145"/>
    </location>
</feature>
<feature type="region of interest" description="Disordered" evidence="2">
    <location>
        <begin position="120"/>
        <end position="145"/>
    </location>
</feature>
<feature type="compositionally biased region" description="Low complexity" evidence="2">
    <location>
        <begin position="120"/>
        <end position="130"/>
    </location>
</feature>
<feature type="compositionally biased region" description="Polar residues" evidence="2">
    <location>
        <begin position="134"/>
        <end position="145"/>
    </location>
</feature>
<gene>
    <name evidence="1" type="primary">rnpA</name>
    <name type="ordered locus">XOO4371</name>
</gene>
<sequence length="145" mass="16056">MNASNPCRRFPRSARVRTRAQYTVVFDNARRTSDPLLSLHWRTGDTPPRLGMAVSRKVDTRAVGRNRIKRVLRDAMRHLLPELAGGDYVIVARSAAAKATNPQIRDAFLRLLRRAGALPLPAAPGTMPPARTMHPSSLSPTEPDL</sequence>
<evidence type="ECO:0000255" key="1">
    <source>
        <dbReference type="HAMAP-Rule" id="MF_00227"/>
    </source>
</evidence>
<evidence type="ECO:0000256" key="2">
    <source>
        <dbReference type="SAM" id="MobiDB-lite"/>
    </source>
</evidence>